<dbReference type="EMBL" id="M85241">
    <property type="protein sequence ID" value="AAA27078.1"/>
    <property type="molecule type" value="Genomic_DNA"/>
</dbReference>
<dbReference type="EMBL" id="L01643">
    <property type="protein sequence ID" value="AAA27109.1"/>
    <property type="molecule type" value="Genomic_DNA"/>
</dbReference>
<dbReference type="EMBL" id="AE006468">
    <property type="protein sequence ID" value="AAL20874.1"/>
    <property type="molecule type" value="Genomic_DNA"/>
</dbReference>
<dbReference type="RefSeq" id="NP_460915.1">
    <property type="nucleotide sequence ID" value="NC_003197.2"/>
</dbReference>
<dbReference type="RefSeq" id="WP_000204899.1">
    <property type="nucleotide sequence ID" value="NC_003197.2"/>
</dbReference>
<dbReference type="PDB" id="3A7M">
    <property type="method" value="X-ray"/>
    <property type="resolution" value="3.20 A"/>
    <property type="chains" value="A/B=1-122"/>
</dbReference>
<dbReference type="PDB" id="5GNA">
    <property type="method" value="X-ray"/>
    <property type="resolution" value="2.30 A"/>
    <property type="chains" value="A=1-94"/>
</dbReference>
<dbReference type="PDB" id="5KP0">
    <property type="method" value="NMR"/>
    <property type="chains" value="A=1-95"/>
</dbReference>
<dbReference type="PDB" id="5KRW">
    <property type="method" value="NMR"/>
    <property type="chains" value="A=1-95"/>
</dbReference>
<dbReference type="PDB" id="5KS6">
    <property type="method" value="NMR"/>
    <property type="chains" value="A=1-122"/>
</dbReference>
<dbReference type="PDB" id="8FTW">
    <property type="method" value="NMR"/>
    <property type="chains" value="A=1-95"/>
</dbReference>
<dbReference type="PDBsum" id="3A7M"/>
<dbReference type="PDBsum" id="5GNA"/>
<dbReference type="PDBsum" id="5KP0"/>
<dbReference type="PDBsum" id="5KRW"/>
<dbReference type="PDBsum" id="5KS6"/>
<dbReference type="PDBsum" id="8FTW"/>
<dbReference type="SMR" id="P0A1N2"/>
<dbReference type="DIP" id="DIP-60504N"/>
<dbReference type="IntAct" id="P0A1N2">
    <property type="interactions" value="5"/>
</dbReference>
<dbReference type="STRING" id="99287.STM1962"/>
<dbReference type="PaxDb" id="99287-STM1962"/>
<dbReference type="GeneID" id="1253483"/>
<dbReference type="KEGG" id="stm:STM1962"/>
<dbReference type="PATRIC" id="fig|99287.12.peg.2078"/>
<dbReference type="HOGENOM" id="CLU_155793_1_0_6"/>
<dbReference type="OMA" id="DMEITYL"/>
<dbReference type="PhylomeDB" id="P0A1N2"/>
<dbReference type="BioCyc" id="SENT99287:STM1962-MONOMER"/>
<dbReference type="EvolutionaryTrace" id="P0A1N2"/>
<dbReference type="Proteomes" id="UP000001014">
    <property type="component" value="Chromosome"/>
</dbReference>
<dbReference type="GO" id="GO:0005829">
    <property type="term" value="C:cytosol"/>
    <property type="evidence" value="ECO:0007669"/>
    <property type="project" value="UniProtKB-SubCell"/>
</dbReference>
<dbReference type="GO" id="GO:0042802">
    <property type="term" value="F:identical protein binding"/>
    <property type="evidence" value="ECO:0000353"/>
    <property type="project" value="IntAct"/>
</dbReference>
<dbReference type="GO" id="GO:0044781">
    <property type="term" value="P:bacterial-type flagellum organization"/>
    <property type="evidence" value="ECO:0007669"/>
    <property type="project" value="UniProtKB-KW"/>
</dbReference>
<dbReference type="GO" id="GO:1902209">
    <property type="term" value="P:negative regulation of bacterial-type flagellum assembly"/>
    <property type="evidence" value="ECO:0007669"/>
    <property type="project" value="UniProtKB-UniRule"/>
</dbReference>
<dbReference type="GO" id="GO:0006457">
    <property type="term" value="P:protein folding"/>
    <property type="evidence" value="ECO:0007669"/>
    <property type="project" value="UniProtKB-UniRule"/>
</dbReference>
<dbReference type="FunFam" id="1.20.58.380:FF:000002">
    <property type="entry name" value="Flagellar protein FliT"/>
    <property type="match status" value="1"/>
</dbReference>
<dbReference type="Gene3D" id="1.20.58.380">
    <property type="entry name" value="Flagellar protein flit"/>
    <property type="match status" value="1"/>
</dbReference>
<dbReference type="HAMAP" id="MF_01180">
    <property type="entry name" value="FliT"/>
    <property type="match status" value="1"/>
</dbReference>
<dbReference type="InterPro" id="IPR008622">
    <property type="entry name" value="FliT"/>
</dbReference>
<dbReference type="NCBIfam" id="NF007836">
    <property type="entry name" value="PRK10548.1"/>
    <property type="match status" value="1"/>
</dbReference>
<dbReference type="Pfam" id="PF05400">
    <property type="entry name" value="FliT"/>
    <property type="match status" value="1"/>
</dbReference>
<organism>
    <name type="scientific">Salmonella typhimurium (strain LT2 / SGSC1412 / ATCC 700720)</name>
    <dbReference type="NCBI Taxonomy" id="99287"/>
    <lineage>
        <taxon>Bacteria</taxon>
        <taxon>Pseudomonadati</taxon>
        <taxon>Pseudomonadota</taxon>
        <taxon>Gammaproteobacteria</taxon>
        <taxon>Enterobacterales</taxon>
        <taxon>Enterobacteriaceae</taxon>
        <taxon>Salmonella</taxon>
    </lineage>
</organism>
<proteinExistence type="evidence at protein level"/>
<gene>
    <name type="primary">fliT</name>
    <name type="ordered locus">STM1962</name>
</gene>
<protein>
    <recommendedName>
        <fullName>Flagellar protein FliT</fullName>
    </recommendedName>
</protein>
<sequence>MTSTVEFINRWQRIALLSQSLLELAQRGEWDLLLQQEVSYLQSIETVMEKQTPPGITRSIQDMVAGYIKQTLDNEQLLKGLLQQRLDELSSLIGQSTRQKSLNNAYGRLSGMLLVPDAPGAS</sequence>
<feature type="chain" id="PRO_0000180977" description="Flagellar protein FliT">
    <location>
        <begin position="1"/>
        <end position="122"/>
    </location>
</feature>
<feature type="region of interest" description="Required for homodimerization">
    <location>
        <begin position="1"/>
        <end position="50"/>
    </location>
</feature>
<feature type="region of interest" description="FliD binding">
    <location>
        <begin position="60"/>
        <end position="98"/>
    </location>
</feature>
<feature type="helix" evidence="7">
    <location>
        <begin position="1"/>
        <end position="26"/>
    </location>
</feature>
<feature type="helix" evidence="7">
    <location>
        <begin position="30"/>
        <end position="49"/>
    </location>
</feature>
<feature type="helix" evidence="7">
    <location>
        <begin position="58"/>
        <end position="93"/>
    </location>
</feature>
<feature type="helix" evidence="6">
    <location>
        <begin position="97"/>
        <end position="110"/>
    </location>
</feature>
<feature type="strand" evidence="8">
    <location>
        <begin position="113"/>
        <end position="117"/>
    </location>
</feature>
<keyword id="KW-0002">3D-structure</keyword>
<keyword id="KW-1005">Bacterial flagellum biogenesis</keyword>
<keyword id="KW-0143">Chaperone</keyword>
<keyword id="KW-0963">Cytoplasm</keyword>
<keyword id="KW-1185">Reference proteome</keyword>
<keyword id="KW-0678">Repressor</keyword>
<keyword id="KW-0804">Transcription</keyword>
<keyword id="KW-0805">Transcription regulation</keyword>
<evidence type="ECO:0000269" key="1">
    <source>
    </source>
</evidence>
<evidence type="ECO:0000269" key="2">
    <source>
    </source>
</evidence>
<evidence type="ECO:0000269" key="3">
    <source>
    </source>
</evidence>
<evidence type="ECO:0000269" key="4">
    <source>
    </source>
</evidence>
<evidence type="ECO:0000305" key="5"/>
<evidence type="ECO:0007829" key="6">
    <source>
        <dbReference type="PDB" id="3A7M"/>
    </source>
</evidence>
<evidence type="ECO:0007829" key="7">
    <source>
        <dbReference type="PDB" id="5GNA"/>
    </source>
</evidence>
<evidence type="ECO:0007829" key="8">
    <source>
        <dbReference type="PDB" id="5KS6"/>
    </source>
</evidence>
<reference key="1">
    <citation type="journal article" date="1992" name="J. Gen. Microbiol.">
        <title>Subdivision of flagellar region III of the Escherichia coli and Salmonella typhimurium chromosomes and identification of two additional flagellar genes.</title>
        <authorList>
            <person name="Kawagishi I."/>
            <person name="Mueller V."/>
            <person name="Williams A.W."/>
            <person name="Irikura V.M."/>
            <person name="Macnab R.M."/>
        </authorList>
    </citation>
    <scope>NUCLEOTIDE SEQUENCE [GENOMIC DNA]</scope>
    <source>
        <strain>SJW1103</strain>
    </source>
</reference>
<reference key="2">
    <citation type="journal article" date="2001" name="Nature">
        <title>Complete genome sequence of Salmonella enterica serovar Typhimurium LT2.</title>
        <authorList>
            <person name="McClelland M."/>
            <person name="Sanderson K.E."/>
            <person name="Spieth J."/>
            <person name="Clifton S.W."/>
            <person name="Latreille P."/>
            <person name="Courtney L."/>
            <person name="Porwollik S."/>
            <person name="Ali J."/>
            <person name="Dante M."/>
            <person name="Du F."/>
            <person name="Hou S."/>
            <person name="Layman D."/>
            <person name="Leonard S."/>
            <person name="Nguyen C."/>
            <person name="Scott K."/>
            <person name="Holmes A."/>
            <person name="Grewal N."/>
            <person name="Mulvaney E."/>
            <person name="Ryan E."/>
            <person name="Sun H."/>
            <person name="Florea L."/>
            <person name="Miller W."/>
            <person name="Stoneking T."/>
            <person name="Nhan M."/>
            <person name="Waterston R."/>
            <person name="Wilson R.K."/>
        </authorList>
    </citation>
    <scope>NUCLEOTIDE SEQUENCE [LARGE SCALE GENOMIC DNA]</scope>
    <source>
        <strain>LT2 / SGSC1412 / ATCC 700720</strain>
    </source>
</reference>
<reference key="3">
    <citation type="journal article" date="1999" name="Genes Genet. Syst.">
        <title>Two novel regulatory genes, fliT and fliZ, in the flagellar regulon of Salmonella.</title>
        <authorList>
            <person name="Kutsukake K."/>
            <person name="Ikebe T."/>
            <person name="Yamamoto S."/>
        </authorList>
    </citation>
    <scope>FUNCTION IN THE REGULATION OF THE FLAGELLAR REGULON</scope>
    <source>
        <strain>LT2 / SGSC1412 / ATCC 700720</strain>
    </source>
</reference>
<reference key="4">
    <citation type="journal article" date="1999" name="Mol. Microbiol.">
        <title>Substrate-specific binding of hook-associated proteins by FlgN and FliT, putative chaperones for flagellum assembly.</title>
        <authorList>
            <person name="Fraser G.M."/>
            <person name="Bennett J.C."/>
            <person name="Hughes C."/>
        </authorList>
    </citation>
    <scope>FUNCTION AS A CHAPERONE</scope>
    <scope>INTERACTION WITH FLID</scope>
    <source>
        <strain>SJW1103</strain>
    </source>
</reference>
<reference key="5">
    <citation type="journal article" date="2001" name="Mol. Microbiol.">
        <title>Substrate complexes and domain organization of the Salmonella flagellar export chaperones FlgN and FliT.</title>
        <authorList>
            <person name="Bennett J.C."/>
            <person name="Thomas J."/>
            <person name="Fraser G.M."/>
            <person name="Hughes C."/>
        </authorList>
    </citation>
    <scope>FUNCTION AS A CHAPERONE</scope>
    <scope>SUBUNIT</scope>
    <scope>INTERACTION WITH FLID</scope>
    <source>
        <strain>SJW1103</strain>
    </source>
</reference>
<reference key="6">
    <citation type="journal article" date="2006" name="J. Bacteriol.">
        <title>FliT acts as an anti-FlhD2C2 factor in the transcriptional control of the flagellar regulon in Salmonella enterica serovar typhimurium.</title>
        <authorList>
            <person name="Yamamoto S."/>
            <person name="Kutsukake K."/>
        </authorList>
    </citation>
    <scope>FUNCTION AS A TRANSCRIPTIONAL REGULATOR OF THE FLAGELLAR REGULON</scope>
    <source>
        <strain>LT2 / SGSC1412 / ATCC 700720</strain>
    </source>
</reference>
<name>FLIT_SALTY</name>
<accession>P0A1N2</accession>
<accession>P26611</accession>
<comment type="function">
    <text evidence="1 2 3 4">Dual-function protein that regulates the transcription of class 2 flagellar operons and that also acts as an export chaperone for the filament-capping protein FliD. As a transcriptional regulator, acts as an anti-FlhDC factor; it directly binds FlhC, thus inhibiting the binding of the FlhC/FlhD complex to class 2 promoters, resulting in decreased expression of class 2 flagellar operons. As a chaperone, effects FliD transition to the membrane by preventing its premature polymerization, and by directing it to the export apparatus.</text>
</comment>
<comment type="subunit">
    <text evidence="1 3">Homodimer. Interacts with FliD and FlhC.</text>
</comment>
<comment type="interaction">
    <interactant intactId="EBI-15610664">
        <id>P0A1N2</id>
    </interactant>
    <interactant intactId="EBI-2011501">
        <id>P06179</id>
        <label>fliC</label>
    </interactant>
    <organismsDiffer>false</organismsDiffer>
    <experiments>2</experiments>
</comment>
<comment type="interaction">
    <interactant intactId="EBI-15610664">
        <id>P0A1N2</id>
    </interactant>
    <interactant intactId="EBI-15850928">
        <id>P16328</id>
        <label>fliD</label>
    </interactant>
    <organismsDiffer>false</organismsDiffer>
    <experiments>4</experiments>
</comment>
<comment type="interaction">
    <interactant intactId="EBI-15610664">
        <id>P0A1N2</id>
    </interactant>
    <interactant intactId="EBI-6515439">
        <id>P26465</id>
        <label>fliI</label>
    </interactant>
    <organismsDiffer>false</organismsDiffer>
    <experiments>2</experiments>
</comment>
<comment type="interaction">
    <interactant intactId="EBI-15610664">
        <id>P0A1N2</id>
    </interactant>
    <interactant intactId="EBI-6410293">
        <id>P0A1K1</id>
        <label>fliJ</label>
    </interactant>
    <organismsDiffer>false</organismsDiffer>
    <experiments>6</experiments>
</comment>
<comment type="interaction">
    <interactant intactId="EBI-15610664">
        <id>P0A1N2</id>
    </interactant>
    <interactant intactId="EBI-15610664">
        <id>P0A1N2</id>
        <label>fliT</label>
    </interactant>
    <organismsDiffer>false</organismsDiffer>
    <experiments>3</experiments>
</comment>
<comment type="subcellular location">
    <subcellularLocation>
        <location>Cytoplasm</location>
        <location>Cytosol</location>
    </subcellularLocation>
</comment>
<comment type="similarity">
    <text evidence="5">Belongs to the FliT family.</text>
</comment>